<accession>P85958</accession>
<protein>
    <recommendedName>
        <fullName>Unknown protein 2</fullName>
    </recommendedName>
</protein>
<reference key="1">
    <citation type="journal article" date="2008" name="J. Proteomics">
        <title>A proteomics approach to identify proteins differentially expressed in Douglas-fir seedlings infected by Phellinus sulphurascens.</title>
        <authorList>
            <person name="Islam M.A."/>
            <person name="Sturrock R.N."/>
            <person name="Ekramoddoullah A.K.M."/>
        </authorList>
    </citation>
    <scope>IDENTIFICATION BY MASS SPECTROMETRY</scope>
</reference>
<proteinExistence type="evidence at protein level"/>
<evidence type="ECO:0000303" key="1">
    <source>
    </source>
</evidence>
<feature type="chain" id="PRO_0000347289" description="Unknown protein 2">
    <location>
        <begin position="1" status="less than"/>
        <end position="10" status="greater than"/>
    </location>
</feature>
<feature type="non-terminal residue" evidence="1">
    <location>
        <position position="1"/>
    </location>
</feature>
<feature type="non-terminal residue" evidence="1">
    <location>
        <position position="10"/>
    </location>
</feature>
<organism>
    <name type="scientific">Pseudotsuga menziesii</name>
    <name type="common">Douglas-fir</name>
    <name type="synonym">Abies menziesii</name>
    <dbReference type="NCBI Taxonomy" id="3357"/>
    <lineage>
        <taxon>Eukaryota</taxon>
        <taxon>Viridiplantae</taxon>
        <taxon>Streptophyta</taxon>
        <taxon>Embryophyta</taxon>
        <taxon>Tracheophyta</taxon>
        <taxon>Spermatophyta</taxon>
        <taxon>Pinopsida</taxon>
        <taxon>Pinidae</taxon>
        <taxon>Conifers I</taxon>
        <taxon>Pinales</taxon>
        <taxon>Pinaceae</taxon>
        <taxon>Pseudotsuga</taxon>
    </lineage>
</organism>
<sequence>FTLTNSDVLE</sequence>
<name>UP02_PSEMZ</name>